<name>CO1A2_EQUSP</name>
<comment type="function">
    <text evidence="5">Type I collagen is a member of group I collagen (fibrillar forming collagen).</text>
</comment>
<comment type="subunit">
    <text evidence="1">Trimers of one alpha 2(I) and two alpha 1(I) chains. Interacts (via C-terminus) with TMEM131 (via PapD-L domain); the interaction is direct and is involved in assembly and TRAPPIII ER-to-Golgi transport complex-dependent secretion of collagen.</text>
</comment>
<comment type="subcellular location">
    <subcellularLocation>
        <location>Secreted</location>
    </subcellularLocation>
    <subcellularLocation>
        <location>Secreted</location>
        <location>Extracellular space</location>
    </subcellularLocation>
    <subcellularLocation>
        <location evidence="5">Secreted</location>
        <location evidence="5">Extracellular space</location>
        <location evidence="5">Extracellular matrix</location>
    </subcellularLocation>
</comment>
<comment type="tissue specificity">
    <text evidence="5">Forms the fibrils of tendon, ligaments and bones. In bones, the fibrils are mineralized with calcium hydroxyapatite.</text>
</comment>
<comment type="PTM">
    <text evidence="5">Prolines at the third position of the tripeptide repeating unit (G-X-Y) are hydroxylated in some or all of the chains.</text>
</comment>
<comment type="miscellaneous">
    <text evidence="6">These protein fragments were extracted from fossils. The tryptic peptides required multiple purification steps in order to eliminate contaminants and to increase the concentration of peptidic material.</text>
</comment>
<comment type="similarity">
    <text evidence="5">Belongs to the fibrillar collagen family.</text>
</comment>
<proteinExistence type="evidence at protein level"/>
<gene>
    <name evidence="1" type="primary">COL1A2</name>
</gene>
<evidence type="ECO:0000250" key="1">
    <source>
        <dbReference type="UniProtKB" id="P08123"/>
    </source>
</evidence>
<evidence type="ECO:0000256" key="2">
    <source>
        <dbReference type="SAM" id="MobiDB-lite"/>
    </source>
</evidence>
<evidence type="ECO:0000269" key="3">
    <source>
    </source>
</evidence>
<evidence type="ECO:0000303" key="4">
    <source>
    </source>
</evidence>
<evidence type="ECO:0000305" key="5"/>
<evidence type="ECO:0000305" key="6">
    <source>
    </source>
</evidence>
<dbReference type="GO" id="GO:0005584">
    <property type="term" value="C:collagen type I trimer"/>
    <property type="evidence" value="ECO:0007669"/>
    <property type="project" value="TreeGrafter"/>
</dbReference>
<dbReference type="GO" id="GO:0005615">
    <property type="term" value="C:extracellular space"/>
    <property type="evidence" value="ECO:0007669"/>
    <property type="project" value="TreeGrafter"/>
</dbReference>
<dbReference type="GO" id="GO:0030020">
    <property type="term" value="F:extracellular matrix structural constituent conferring tensile strength"/>
    <property type="evidence" value="ECO:0007669"/>
    <property type="project" value="TreeGrafter"/>
</dbReference>
<dbReference type="GO" id="GO:0030198">
    <property type="term" value="P:extracellular matrix organization"/>
    <property type="evidence" value="ECO:0007669"/>
    <property type="project" value="TreeGrafter"/>
</dbReference>
<dbReference type="InterPro" id="IPR008160">
    <property type="entry name" value="Collagen"/>
</dbReference>
<dbReference type="InterPro" id="IPR050149">
    <property type="entry name" value="Collagen_superfamily"/>
</dbReference>
<dbReference type="PANTHER" id="PTHR24023">
    <property type="entry name" value="COLLAGEN ALPHA"/>
    <property type="match status" value="1"/>
</dbReference>
<dbReference type="PANTHER" id="PTHR24023:SF568">
    <property type="entry name" value="COLLAGEN ALPHA-2(I) CHAIN"/>
    <property type="match status" value="1"/>
</dbReference>
<dbReference type="Pfam" id="PF01391">
    <property type="entry name" value="Collagen"/>
    <property type="match status" value="4"/>
</dbReference>
<reference evidence="5" key="1">
    <citation type="journal article" date="2015" name="Nature">
        <title>Ancient proteins resolve the evolutionary history of Darwin's South American ungulates.</title>
        <authorList>
            <person name="Welker F."/>
            <person name="Collins M.J."/>
            <person name="Thomas J.A."/>
            <person name="Wadsley M."/>
            <person name="Brace S."/>
            <person name="Cappellini E."/>
            <person name="Turvey S.T."/>
            <person name="Reguero M."/>
            <person name="Gelfo J.N."/>
            <person name="Kramarz A."/>
            <person name="Burger J."/>
            <person name="Thomas-Oates J."/>
            <person name="Ashford D.A."/>
            <person name="Ashton P.D."/>
            <person name="Rowsell K."/>
            <person name="Porter D.M."/>
            <person name="Kessler B."/>
            <person name="Fischer R."/>
            <person name="Baessmann C."/>
            <person name="Kaspar S."/>
            <person name="Olsen J.V."/>
            <person name="Kiley P."/>
            <person name="Elliott J.A."/>
            <person name="Kelstrup C.D."/>
            <person name="Mullin V."/>
            <person name="Hofreiter M."/>
            <person name="Willerslev E."/>
            <person name="Hublin J.J."/>
            <person name="Orlando L."/>
            <person name="Barnes I."/>
            <person name="MacPhee R.D."/>
        </authorList>
    </citation>
    <scope>PROTEIN SEQUENCE</scope>
    <scope>IDENTIFICATION BY MASS SPECTROMETRY</scope>
    <source>
        <tissue evidence="4">Bone</tissue>
    </source>
</reference>
<protein>
    <recommendedName>
        <fullName evidence="4">Collagen alpha-2(I) chain</fullName>
    </recommendedName>
    <alternativeName>
        <fullName evidence="1">Alpha-2 type I collagen</fullName>
    </alternativeName>
</protein>
<keyword id="KW-0106">Calcium</keyword>
<keyword id="KW-0176">Collagen</keyword>
<keyword id="KW-0903">Direct protein sequencing</keyword>
<keyword id="KW-0272">Extracellular matrix</keyword>
<keyword id="KW-0379">Hydroxylation</keyword>
<keyword id="KW-0677">Repeat</keyword>
<keyword id="KW-0964">Secreted</keyword>
<organism evidence="4">
    <name type="scientific">Equus sp</name>
    <dbReference type="NCBI Taxonomy" id="46122"/>
    <lineage>
        <taxon>Eukaryota</taxon>
        <taxon>Metazoa</taxon>
        <taxon>Chordata</taxon>
        <taxon>Craniata</taxon>
        <taxon>Vertebrata</taxon>
        <taxon>Euteleostomi</taxon>
        <taxon>Mammalia</taxon>
        <taxon>Eutheria</taxon>
        <taxon>Laurasiatheria</taxon>
        <taxon>Perissodactyla</taxon>
        <taxon>Equidae</taxon>
        <taxon>Equus</taxon>
    </lineage>
</organism>
<feature type="chain" id="PRO_0000433501" description="Collagen alpha-2(I) chain" evidence="3">
    <location>
        <begin position="1"/>
        <end position="912"/>
    </location>
</feature>
<feature type="region of interest" description="Disordered" evidence="2">
    <location>
        <begin position="1"/>
        <end position="206"/>
    </location>
</feature>
<feature type="region of interest" description="Disordered" evidence="2">
    <location>
        <begin position="222"/>
        <end position="739"/>
    </location>
</feature>
<feature type="region of interest" description="Disordered" evidence="2">
    <location>
        <begin position="763"/>
        <end position="912"/>
    </location>
</feature>
<feature type="compositionally biased region" description="Low complexity" evidence="2">
    <location>
        <begin position="1"/>
        <end position="41"/>
    </location>
</feature>
<feature type="compositionally biased region" description="Basic and acidic residues" evidence="2">
    <location>
        <begin position="43"/>
        <end position="57"/>
    </location>
</feature>
<feature type="compositionally biased region" description="Low complexity" evidence="2">
    <location>
        <begin position="124"/>
        <end position="153"/>
    </location>
</feature>
<feature type="compositionally biased region" description="Low complexity" evidence="2">
    <location>
        <begin position="178"/>
        <end position="192"/>
    </location>
</feature>
<feature type="compositionally biased region" description="Low complexity" evidence="2">
    <location>
        <begin position="229"/>
        <end position="244"/>
    </location>
</feature>
<feature type="compositionally biased region" description="Low complexity" evidence="2">
    <location>
        <begin position="295"/>
        <end position="327"/>
    </location>
</feature>
<feature type="compositionally biased region" description="Low complexity" evidence="2">
    <location>
        <begin position="360"/>
        <end position="382"/>
    </location>
</feature>
<feature type="compositionally biased region" description="Low complexity" evidence="2">
    <location>
        <begin position="406"/>
        <end position="424"/>
    </location>
</feature>
<feature type="compositionally biased region" description="Gly residues" evidence="2">
    <location>
        <begin position="431"/>
        <end position="440"/>
    </location>
</feature>
<feature type="compositionally biased region" description="Low complexity" evidence="2">
    <location>
        <begin position="474"/>
        <end position="501"/>
    </location>
</feature>
<feature type="compositionally biased region" description="Low complexity" evidence="2">
    <location>
        <begin position="517"/>
        <end position="532"/>
    </location>
</feature>
<feature type="compositionally biased region" description="Gly residues" evidence="2">
    <location>
        <begin position="539"/>
        <end position="548"/>
    </location>
</feature>
<feature type="compositionally biased region" description="Low complexity" evidence="2">
    <location>
        <begin position="549"/>
        <end position="612"/>
    </location>
</feature>
<feature type="compositionally biased region" description="Low complexity" evidence="2">
    <location>
        <begin position="622"/>
        <end position="637"/>
    </location>
</feature>
<feature type="compositionally biased region" description="Gly residues" evidence="2">
    <location>
        <begin position="647"/>
        <end position="656"/>
    </location>
</feature>
<feature type="compositionally biased region" description="Low complexity" evidence="2">
    <location>
        <begin position="658"/>
        <end position="667"/>
    </location>
</feature>
<feature type="compositionally biased region" description="Low complexity" evidence="2">
    <location>
        <begin position="728"/>
        <end position="739"/>
    </location>
</feature>
<feature type="compositionally biased region" description="Low complexity" evidence="2">
    <location>
        <begin position="763"/>
        <end position="785"/>
    </location>
</feature>
<feature type="compositionally biased region" description="Low complexity" evidence="2">
    <location>
        <begin position="805"/>
        <end position="815"/>
    </location>
</feature>
<feature type="compositionally biased region" description="Low complexity" evidence="2">
    <location>
        <begin position="830"/>
        <end position="850"/>
    </location>
</feature>
<feature type="unsure residue" description="I or L" evidence="3">
    <location>
        <position position="5"/>
    </location>
</feature>
<feature type="unsure residue" description="I or L" evidence="3">
    <location>
        <position position="75"/>
    </location>
</feature>
<feature type="unsure residue" description="I or L" evidence="3">
    <location>
        <position position="84"/>
    </location>
</feature>
<feature type="unsure residue" description="I or L" evidence="3">
    <location>
        <position position="87"/>
    </location>
</feature>
<feature type="unsure residue" description="I or L" evidence="3">
    <location>
        <position position="117"/>
    </location>
</feature>
<feature type="unsure residue" description="I or L" evidence="3">
    <location>
        <position position="148"/>
    </location>
</feature>
<feature type="unsure residue" description="I or L" evidence="3">
    <location>
        <position position="166"/>
    </location>
</feature>
<feature type="unsure residue" description="I or L" evidence="3">
    <location>
        <position position="186"/>
    </location>
</feature>
<feature type="unsure residue" description="I or L" evidence="3">
    <location>
        <position position="189"/>
    </location>
</feature>
<feature type="unsure residue" description="I or L" evidence="3">
    <location>
        <position position="204"/>
    </location>
</feature>
<feature type="unsure residue" description="I or L" evidence="3">
    <location>
        <position position="213"/>
    </location>
</feature>
<feature type="unsure residue" description="I or L" evidence="3">
    <location>
        <position position="222"/>
    </location>
</feature>
<feature type="unsure residue" description="I or L" evidence="3">
    <location>
        <position position="228"/>
    </location>
</feature>
<feature type="unsure residue" description="I or L" evidence="3">
    <location>
        <position position="243"/>
    </location>
</feature>
<feature type="unsure residue" description="I or L" evidence="3">
    <location>
        <position position="297"/>
    </location>
</feature>
<feature type="unsure residue" description="I or L" evidence="3">
    <location>
        <position position="300"/>
    </location>
</feature>
<feature type="unsure residue" description="I or L" evidence="3">
    <location>
        <position position="339"/>
    </location>
</feature>
<feature type="unsure residue" description="I or L" evidence="3">
    <location>
        <position position="352"/>
    </location>
</feature>
<feature type="unsure residue" description="I or L" evidence="3">
    <location>
        <position position="363"/>
    </location>
</feature>
<feature type="unsure residue" description="I or L" evidence="3">
    <location>
        <position position="366"/>
    </location>
</feature>
<feature type="unsure residue" description="I or L" evidence="3">
    <location>
        <position position="373"/>
    </location>
</feature>
<feature type="unsure residue" description="I or L" evidence="3">
    <location>
        <position position="385"/>
    </location>
</feature>
<feature type="unsure residue" description="I or L" evidence="3">
    <location>
        <position position="408"/>
    </location>
</feature>
<feature type="unsure residue" description="I or L" evidence="3">
    <location>
        <position position="450"/>
    </location>
</feature>
<feature type="unsure residue" description="I or L" evidence="3">
    <location>
        <position position="468"/>
    </location>
</feature>
<feature type="unsure residue" description="I or L" evidence="3">
    <location>
        <position position="474"/>
    </location>
</feature>
<feature type="unsure residue" description="I or L" evidence="3">
    <location>
        <position position="496"/>
    </location>
</feature>
<feature type="unsure residue" description="I or L" evidence="3">
    <location>
        <position position="517"/>
    </location>
</feature>
<feature type="unsure residue" description="I or L" evidence="3">
    <location>
        <position position="531"/>
    </location>
</feature>
<feature type="unsure residue" description="I or L" evidence="3">
    <location>
        <position position="540"/>
    </location>
</feature>
<feature type="unsure residue" description="I or L" evidence="3">
    <location>
        <position position="547"/>
    </location>
</feature>
<feature type="unsure residue" description="I or L" evidence="3">
    <location>
        <position position="675"/>
    </location>
</feature>
<feature type="unsure residue" description="I or L" evidence="3">
    <location>
        <position position="731"/>
    </location>
</feature>
<feature type="unsure residue" description="I or L" evidence="3">
    <location>
        <position position="732"/>
    </location>
</feature>
<feature type="unsure residue" description="I or L" evidence="3">
    <location>
        <position position="737"/>
    </location>
</feature>
<feature type="unsure residue" description="I or L" evidence="3">
    <location>
        <position position="738"/>
    </location>
</feature>
<feature type="unsure residue" description="I or L" evidence="3">
    <location>
        <position position="740"/>
    </location>
</feature>
<feature type="unsure residue" description="I or L" evidence="3">
    <location>
        <position position="746"/>
    </location>
</feature>
<feature type="unsure residue" description="I or L" evidence="3">
    <location>
        <position position="753"/>
    </location>
</feature>
<feature type="unsure residue" description="I or L" evidence="3">
    <location>
        <position position="759"/>
    </location>
</feature>
<feature type="unsure residue" description="I or L" evidence="3">
    <location>
        <position position="761"/>
    </location>
</feature>
<feature type="unsure residue" description="I or L" evidence="3">
    <location>
        <position position="859"/>
    </location>
</feature>
<feature type="unsure residue" description="I or L" evidence="3">
    <location>
        <position position="862"/>
    </location>
</feature>
<feature type="unsure residue" description="I or L" evidence="3">
    <location>
        <position position="865"/>
    </location>
</feature>
<feature type="non-consecutive residues" evidence="4">
    <location>
        <begin position="42"/>
        <end position="43"/>
    </location>
</feature>
<feature type="non-consecutive residues" evidence="4">
    <location>
        <begin position="79"/>
        <end position="80"/>
    </location>
</feature>
<feature type="non-consecutive residues" evidence="4">
    <location>
        <begin position="298"/>
        <end position="299"/>
    </location>
</feature>
<feature type="non-consecutive residues" evidence="4">
    <location>
        <begin position="481"/>
        <end position="482"/>
    </location>
</feature>
<feature type="non-consecutive residues" evidence="4">
    <location>
        <begin position="544"/>
        <end position="545"/>
    </location>
</feature>
<feature type="non-consecutive residues" evidence="4">
    <location>
        <begin position="589"/>
        <end position="590"/>
    </location>
</feature>
<feature type="non-consecutive residues" evidence="4">
    <location>
        <begin position="616"/>
        <end position="617"/>
    </location>
</feature>
<feature type="non-consecutive residues" evidence="4">
    <location>
        <begin position="687"/>
        <end position="688"/>
    </location>
</feature>
<feature type="non-consecutive residues" evidence="4">
    <location>
        <begin position="744"/>
        <end position="745"/>
    </location>
</feature>
<feature type="non-consecutive residues" evidence="4">
    <location>
        <begin position="800"/>
        <end position="801"/>
    </location>
</feature>
<feature type="non-consecutive residues" evidence="4">
    <location>
        <begin position="826"/>
        <end position="827"/>
    </location>
</feature>
<feature type="non-consecutive residues" evidence="4">
    <location>
        <begin position="854"/>
        <end position="855"/>
    </location>
</feature>
<feature type="non-consecutive residues" evidence="4">
    <location>
        <begin position="896"/>
        <end position="897"/>
    </location>
</feature>
<accession>C0HJP0</accession>
<sequence>GPMGIMGPRGPPGASGAPGPQGFQGPAGEPGEPGQTGPAGARAGEDGHPGKPGRPGERGVVGPQGARGFPGTPGIPGFKGHNGIDGIKGQPGAPGVKGEPGAPGENGTPGQAGARGIPGERGRVGAPGPAGARGSDGSVGPVGPAGPIGSAGPPGFPGAPGPKGEIGPVGNPGPAGPAGPRGEVGIPGISGPVGPPGNPGANGITGAKGAAGIPGVAGAPGIPGPRGIPGPAGAAGATGARGIVGEPGPAGSKGESGNKGEPGAAGPQGPPGPSGEEGKRGPNGEPGSTGPAGPPGIRGIPGADGRAGVMGPAGSRGASGPAGVRGPNGDSGRPGEPGIMGPRGFPGSPGNIGPAGKEGPVGIPGIDGRPGPIGPAGARGEPGNIGFPGPKGPSGEPGKPGDKGDAGIAGARGAPGPDGNNGAQGPPGPQGVQGGKGEQGPAGPPGFQGIPGPAGTAGEVGKPGERGIPGEFGIPGPAGARGPPGESGAAGPAGPIGSRGPSGPPGPDGNKGEPGVIGAPGTAGPSGPSGIPGERGAAGIPGGKGEIGNPGRDGARGAPGAVGAPGPAGANGDRGEAGAAGPAGPAGPRGEVGPAGPNGFAGPAGAAGQPGAKGERGPKGENGPVGPTGPVGAAGPSGPNGPPGPAGSRGDGGPPGVTGFPGAAGRTGPPGPSGISGPPGPPGAAGKGDQGPVGRAGETGASGPPGFAGEKGPSGEPGTAGPPGTPGPQGIIGAPGIIGIPGSRGIPGVAGSIGEPGPIGIAGPPGARGPPGAVGAPGVNGAPGEAGRDGNPGSDGPPGRGYPGNAGPVGAVGAPGPHGPVGPTGKRGEPGPVGSVGPVGAVGPRGPSGPQGVRGHNGIQGIPGIAGQHGDQGAPGSVGPAGPRGPAGPTGPVGKDSGQPGTVGPAGVRGSQ</sequence>